<gene>
    <name evidence="1" type="primary">argJ</name>
    <name type="ordered locus">Pcar_2322</name>
</gene>
<comment type="function">
    <text evidence="1">Catalyzes two activities which are involved in the cyclic version of arginine biosynthesis: the synthesis of N-acetylglutamate from glutamate and acetyl-CoA as the acetyl donor, and of ornithine by transacetylation between N(2)-acetylornithine and glutamate.</text>
</comment>
<comment type="catalytic activity">
    <reaction evidence="1">
        <text>N(2)-acetyl-L-ornithine + L-glutamate = N-acetyl-L-glutamate + L-ornithine</text>
        <dbReference type="Rhea" id="RHEA:15349"/>
        <dbReference type="ChEBI" id="CHEBI:29985"/>
        <dbReference type="ChEBI" id="CHEBI:44337"/>
        <dbReference type="ChEBI" id="CHEBI:46911"/>
        <dbReference type="ChEBI" id="CHEBI:57805"/>
        <dbReference type="EC" id="2.3.1.35"/>
    </reaction>
</comment>
<comment type="catalytic activity">
    <reaction evidence="1">
        <text>L-glutamate + acetyl-CoA = N-acetyl-L-glutamate + CoA + H(+)</text>
        <dbReference type="Rhea" id="RHEA:24292"/>
        <dbReference type="ChEBI" id="CHEBI:15378"/>
        <dbReference type="ChEBI" id="CHEBI:29985"/>
        <dbReference type="ChEBI" id="CHEBI:44337"/>
        <dbReference type="ChEBI" id="CHEBI:57287"/>
        <dbReference type="ChEBI" id="CHEBI:57288"/>
        <dbReference type="EC" id="2.3.1.1"/>
    </reaction>
</comment>
<comment type="pathway">
    <text evidence="1">Amino-acid biosynthesis; L-arginine biosynthesis; L-ornithine and N-acetyl-L-glutamate from L-glutamate and N(2)-acetyl-L-ornithine (cyclic): step 1/1.</text>
</comment>
<comment type="pathway">
    <text evidence="1">Amino-acid biosynthesis; L-arginine biosynthesis; N(2)-acetyl-L-ornithine from L-glutamate: step 1/4.</text>
</comment>
<comment type="subunit">
    <text evidence="1">Heterotetramer of two alpha and two beta chains.</text>
</comment>
<comment type="subcellular location">
    <subcellularLocation>
        <location evidence="1">Cytoplasm</location>
    </subcellularLocation>
</comment>
<comment type="similarity">
    <text evidence="1">Belongs to the ArgJ family.</text>
</comment>
<dbReference type="EC" id="2.3.1.35" evidence="1"/>
<dbReference type="EC" id="2.3.1.1" evidence="1"/>
<dbReference type="EMBL" id="CP000142">
    <property type="protein sequence ID" value="ABA89561.1"/>
    <property type="molecule type" value="Genomic_DNA"/>
</dbReference>
<dbReference type="SMR" id="Q3A246"/>
<dbReference type="STRING" id="338963.Pcar_2322"/>
<dbReference type="MEROPS" id="T05.002"/>
<dbReference type="KEGG" id="pca:Pcar_2322"/>
<dbReference type="eggNOG" id="COG1364">
    <property type="taxonomic scope" value="Bacteria"/>
</dbReference>
<dbReference type="HOGENOM" id="CLU_027172_1_0_7"/>
<dbReference type="OrthoDB" id="9804242at2"/>
<dbReference type="UniPathway" id="UPA00068">
    <property type="reaction ID" value="UER00106"/>
</dbReference>
<dbReference type="UniPathway" id="UPA00068">
    <property type="reaction ID" value="UER00111"/>
</dbReference>
<dbReference type="Proteomes" id="UP000002534">
    <property type="component" value="Chromosome"/>
</dbReference>
<dbReference type="GO" id="GO:0005737">
    <property type="term" value="C:cytoplasm"/>
    <property type="evidence" value="ECO:0007669"/>
    <property type="project" value="UniProtKB-SubCell"/>
</dbReference>
<dbReference type="GO" id="GO:0004358">
    <property type="term" value="F:glutamate N-acetyltransferase activity"/>
    <property type="evidence" value="ECO:0007669"/>
    <property type="project" value="UniProtKB-UniRule"/>
</dbReference>
<dbReference type="GO" id="GO:0004042">
    <property type="term" value="F:L-glutamate N-acetyltransferase activity"/>
    <property type="evidence" value="ECO:0007669"/>
    <property type="project" value="UniProtKB-UniRule"/>
</dbReference>
<dbReference type="GO" id="GO:0006526">
    <property type="term" value="P:L-arginine biosynthetic process"/>
    <property type="evidence" value="ECO:0007669"/>
    <property type="project" value="UniProtKB-UniRule"/>
</dbReference>
<dbReference type="GO" id="GO:0006592">
    <property type="term" value="P:ornithine biosynthetic process"/>
    <property type="evidence" value="ECO:0007669"/>
    <property type="project" value="TreeGrafter"/>
</dbReference>
<dbReference type="CDD" id="cd02152">
    <property type="entry name" value="OAT"/>
    <property type="match status" value="1"/>
</dbReference>
<dbReference type="FunFam" id="3.10.20.340:FF:000001">
    <property type="entry name" value="Arginine biosynthesis bifunctional protein ArgJ, chloroplastic"/>
    <property type="match status" value="1"/>
</dbReference>
<dbReference type="FunFam" id="3.60.70.12:FF:000001">
    <property type="entry name" value="Arginine biosynthesis bifunctional protein ArgJ, chloroplastic"/>
    <property type="match status" value="1"/>
</dbReference>
<dbReference type="Gene3D" id="3.10.20.340">
    <property type="entry name" value="ArgJ beta chain, C-terminal domain"/>
    <property type="match status" value="1"/>
</dbReference>
<dbReference type="Gene3D" id="3.60.70.12">
    <property type="entry name" value="L-amino peptidase D-ALA esterase/amidase"/>
    <property type="match status" value="1"/>
</dbReference>
<dbReference type="HAMAP" id="MF_01106">
    <property type="entry name" value="ArgJ"/>
    <property type="match status" value="1"/>
</dbReference>
<dbReference type="InterPro" id="IPR002813">
    <property type="entry name" value="Arg_biosynth_ArgJ"/>
</dbReference>
<dbReference type="InterPro" id="IPR016117">
    <property type="entry name" value="ArgJ-like_dom_sf"/>
</dbReference>
<dbReference type="InterPro" id="IPR042195">
    <property type="entry name" value="ArgJ_beta_C"/>
</dbReference>
<dbReference type="NCBIfam" id="TIGR00120">
    <property type="entry name" value="ArgJ"/>
    <property type="match status" value="1"/>
</dbReference>
<dbReference type="NCBIfam" id="NF003802">
    <property type="entry name" value="PRK05388.1"/>
    <property type="match status" value="1"/>
</dbReference>
<dbReference type="PANTHER" id="PTHR23100">
    <property type="entry name" value="ARGININE BIOSYNTHESIS BIFUNCTIONAL PROTEIN ARGJ"/>
    <property type="match status" value="1"/>
</dbReference>
<dbReference type="PANTHER" id="PTHR23100:SF0">
    <property type="entry name" value="ARGININE BIOSYNTHESIS BIFUNCTIONAL PROTEIN ARGJ, MITOCHONDRIAL"/>
    <property type="match status" value="1"/>
</dbReference>
<dbReference type="Pfam" id="PF01960">
    <property type="entry name" value="ArgJ"/>
    <property type="match status" value="1"/>
</dbReference>
<dbReference type="SUPFAM" id="SSF56266">
    <property type="entry name" value="DmpA/ArgJ-like"/>
    <property type="match status" value="1"/>
</dbReference>
<reference key="1">
    <citation type="submission" date="2005-10" db="EMBL/GenBank/DDBJ databases">
        <title>Complete sequence of Pelobacter carbinolicus DSM 2380.</title>
        <authorList>
            <person name="Copeland A."/>
            <person name="Lucas S."/>
            <person name="Lapidus A."/>
            <person name="Barry K."/>
            <person name="Detter J.C."/>
            <person name="Glavina T."/>
            <person name="Hammon N."/>
            <person name="Israni S."/>
            <person name="Pitluck S."/>
            <person name="Chertkov O."/>
            <person name="Schmutz J."/>
            <person name="Larimer F."/>
            <person name="Land M."/>
            <person name="Kyrpides N."/>
            <person name="Ivanova N."/>
            <person name="Richardson P."/>
        </authorList>
    </citation>
    <scope>NUCLEOTIDE SEQUENCE [LARGE SCALE GENOMIC DNA]</scope>
    <source>
        <strain>DSM 2380 / NBRC 103641 / GraBd1</strain>
    </source>
</reference>
<keyword id="KW-0012">Acyltransferase</keyword>
<keyword id="KW-0028">Amino-acid biosynthesis</keyword>
<keyword id="KW-0055">Arginine biosynthesis</keyword>
<keyword id="KW-0068">Autocatalytic cleavage</keyword>
<keyword id="KW-0963">Cytoplasm</keyword>
<keyword id="KW-0511">Multifunctional enzyme</keyword>
<keyword id="KW-1185">Reference proteome</keyword>
<keyword id="KW-0808">Transferase</keyword>
<protein>
    <recommendedName>
        <fullName evidence="1">Arginine biosynthesis bifunctional protein ArgJ</fullName>
    </recommendedName>
    <domain>
        <recommendedName>
            <fullName evidence="1">Glutamate N-acetyltransferase</fullName>
            <ecNumber evidence="1">2.3.1.35</ecNumber>
        </recommendedName>
        <alternativeName>
            <fullName evidence="1">Ornithine acetyltransferase</fullName>
            <shortName evidence="1">OATase</shortName>
        </alternativeName>
        <alternativeName>
            <fullName evidence="1">Ornithine transacetylase</fullName>
        </alternativeName>
    </domain>
    <domain>
        <recommendedName>
            <fullName evidence="1">Amino-acid acetyltransferase</fullName>
            <ecNumber evidence="1">2.3.1.1</ecNumber>
        </recommendedName>
        <alternativeName>
            <fullName evidence="1">N-acetylglutamate synthase</fullName>
            <shortName evidence="1">AGSase</shortName>
        </alternativeName>
    </domain>
    <component>
        <recommendedName>
            <fullName evidence="1">Arginine biosynthesis bifunctional protein ArgJ alpha chain</fullName>
        </recommendedName>
    </component>
    <component>
        <recommendedName>
            <fullName evidence="1">Arginine biosynthesis bifunctional protein ArgJ beta chain</fullName>
        </recommendedName>
    </component>
</protein>
<organism>
    <name type="scientific">Syntrophotalea carbinolica (strain DSM 2380 / NBRC 103641 / GraBd1)</name>
    <name type="common">Pelobacter carbinolicus</name>
    <dbReference type="NCBI Taxonomy" id="338963"/>
    <lineage>
        <taxon>Bacteria</taxon>
        <taxon>Pseudomonadati</taxon>
        <taxon>Thermodesulfobacteriota</taxon>
        <taxon>Desulfuromonadia</taxon>
        <taxon>Desulfuromonadales</taxon>
        <taxon>Syntrophotaleaceae</taxon>
        <taxon>Syntrophotalea</taxon>
    </lineage>
</organism>
<evidence type="ECO:0000255" key="1">
    <source>
        <dbReference type="HAMAP-Rule" id="MF_01106"/>
    </source>
</evidence>
<name>ARGJ_SYNC1</name>
<sequence length="393" mass="41236">MVKVNGFSFVARSAGIRKSGKPDLGLIFSTVPARCAGVFTTNKVQAAPVLVTAPRIAAGECQAVLVNSGNANACTGEVGMQDALRCGQLAAKSLGIDEQLVAVSSTGVIGHPLPMPLLEKTIPGMSEGLSETAVDDVANAMMTTDSFAKVASRQAGDSAPYTILGVAKGAGMIHPNMATMLSFVMTDACVDQHFLQQALRQAVEGSFNIITVDRDTSTNDMVLVLANGESKTPEIVADSAEGQEFAELLRGVLLDLAKMIVRDGEGATKLVHVCVNGAADDGDARKVAYNVATSNLVKTAFFGEDANWGRIIAAVGYSEAQVDPSRIAIFFDGVPVVQKGLGTGPELEAQATDVLKQAEFSVTIDLGLGDGRGEYYTSDLTYEYVKINADYRT</sequence>
<feature type="chain" id="PRO_0000227242" description="Arginine biosynthesis bifunctional protein ArgJ alpha chain" evidence="1">
    <location>
        <begin position="1"/>
        <end position="178"/>
    </location>
</feature>
<feature type="chain" id="PRO_0000227243" description="Arginine biosynthesis bifunctional protein ArgJ beta chain" evidence="1">
    <location>
        <begin position="179"/>
        <end position="393"/>
    </location>
</feature>
<feature type="active site" description="Nucleophile" evidence="1">
    <location>
        <position position="179"/>
    </location>
</feature>
<feature type="binding site" evidence="1">
    <location>
        <position position="143"/>
    </location>
    <ligand>
        <name>substrate</name>
    </ligand>
</feature>
<feature type="binding site" evidence="1">
    <location>
        <position position="168"/>
    </location>
    <ligand>
        <name>substrate</name>
    </ligand>
</feature>
<feature type="binding site" evidence="1">
    <location>
        <position position="179"/>
    </location>
    <ligand>
        <name>substrate</name>
    </ligand>
</feature>
<feature type="binding site" evidence="1">
    <location>
        <position position="265"/>
    </location>
    <ligand>
        <name>substrate</name>
    </ligand>
</feature>
<feature type="binding site" evidence="1">
    <location>
        <position position="388"/>
    </location>
    <ligand>
        <name>substrate</name>
    </ligand>
</feature>
<feature type="binding site" evidence="1">
    <location>
        <position position="393"/>
    </location>
    <ligand>
        <name>substrate</name>
    </ligand>
</feature>
<feature type="site" description="Involved in the stabilization of negative charge on the oxyanion by the formation of the oxyanion hole" evidence="1">
    <location>
        <position position="106"/>
    </location>
</feature>
<feature type="site" description="Involved in the stabilization of negative charge on the oxyanion by the formation of the oxyanion hole" evidence="1">
    <location>
        <position position="107"/>
    </location>
</feature>
<feature type="site" description="Cleavage; by autolysis" evidence="1">
    <location>
        <begin position="178"/>
        <end position="179"/>
    </location>
</feature>
<proteinExistence type="inferred from homology"/>
<accession>Q3A246</accession>